<reference key="1">
    <citation type="journal article" date="2001" name="Nature">
        <title>Massive gene decay in the leprosy bacillus.</title>
        <authorList>
            <person name="Cole S.T."/>
            <person name="Eiglmeier K."/>
            <person name="Parkhill J."/>
            <person name="James K.D."/>
            <person name="Thomson N.R."/>
            <person name="Wheeler P.R."/>
            <person name="Honore N."/>
            <person name="Garnier T."/>
            <person name="Churcher C.M."/>
            <person name="Harris D.E."/>
            <person name="Mungall K.L."/>
            <person name="Basham D."/>
            <person name="Brown D."/>
            <person name="Chillingworth T."/>
            <person name="Connor R."/>
            <person name="Davies R.M."/>
            <person name="Devlin K."/>
            <person name="Duthoy S."/>
            <person name="Feltwell T."/>
            <person name="Fraser A."/>
            <person name="Hamlin N."/>
            <person name="Holroyd S."/>
            <person name="Hornsby T."/>
            <person name="Jagels K."/>
            <person name="Lacroix C."/>
            <person name="Maclean J."/>
            <person name="Moule S."/>
            <person name="Murphy L.D."/>
            <person name="Oliver K."/>
            <person name="Quail M.A."/>
            <person name="Rajandream M.A."/>
            <person name="Rutherford K.M."/>
            <person name="Rutter S."/>
            <person name="Seeger K."/>
            <person name="Simon S."/>
            <person name="Simmonds M."/>
            <person name="Skelton J."/>
            <person name="Squares R."/>
            <person name="Squares S."/>
            <person name="Stevens K."/>
            <person name="Taylor K."/>
            <person name="Whitehead S."/>
            <person name="Woodward J.R."/>
            <person name="Barrell B.G."/>
        </authorList>
    </citation>
    <scope>NUCLEOTIDE SEQUENCE [LARGE SCALE GENOMIC DNA]</scope>
    <source>
        <strain>TN</strain>
    </source>
</reference>
<name>Y563_MYCLE</name>
<keyword id="KW-0067">ATP-binding</keyword>
<keyword id="KW-0342">GTP-binding</keyword>
<keyword id="KW-0547">Nucleotide-binding</keyword>
<keyword id="KW-1185">Reference proteome</keyword>
<evidence type="ECO:0000255" key="1">
    <source>
        <dbReference type="HAMAP-Rule" id="MF_00636"/>
    </source>
</evidence>
<protein>
    <recommendedName>
        <fullName evidence="1">Nucleotide-binding protein ML0563</fullName>
    </recommendedName>
</protein>
<dbReference type="EMBL" id="AL583918">
    <property type="protein sequence ID" value="CAC30071.1"/>
    <property type="molecule type" value="Genomic_DNA"/>
</dbReference>
<dbReference type="PIR" id="C86979">
    <property type="entry name" value="C86979"/>
</dbReference>
<dbReference type="RefSeq" id="NP_301477.1">
    <property type="nucleotide sequence ID" value="NC_002677.1"/>
</dbReference>
<dbReference type="SMR" id="Q9CCP0"/>
<dbReference type="STRING" id="272631.gene:17574384"/>
<dbReference type="KEGG" id="mle:ML0563"/>
<dbReference type="PATRIC" id="fig|272631.5.peg.974"/>
<dbReference type="Leproma" id="ML0563"/>
<dbReference type="eggNOG" id="COG1660">
    <property type="taxonomic scope" value="Bacteria"/>
</dbReference>
<dbReference type="HOGENOM" id="CLU_059558_0_0_11"/>
<dbReference type="OrthoDB" id="9784461at2"/>
<dbReference type="Proteomes" id="UP000000806">
    <property type="component" value="Chromosome"/>
</dbReference>
<dbReference type="GO" id="GO:0005524">
    <property type="term" value="F:ATP binding"/>
    <property type="evidence" value="ECO:0007669"/>
    <property type="project" value="UniProtKB-UniRule"/>
</dbReference>
<dbReference type="GO" id="GO:0005525">
    <property type="term" value="F:GTP binding"/>
    <property type="evidence" value="ECO:0007669"/>
    <property type="project" value="UniProtKB-UniRule"/>
</dbReference>
<dbReference type="HAMAP" id="MF_00636">
    <property type="entry name" value="RapZ_like"/>
    <property type="match status" value="1"/>
</dbReference>
<dbReference type="InterPro" id="IPR027417">
    <property type="entry name" value="P-loop_NTPase"/>
</dbReference>
<dbReference type="InterPro" id="IPR005337">
    <property type="entry name" value="RapZ-like"/>
</dbReference>
<dbReference type="InterPro" id="IPR053930">
    <property type="entry name" value="RapZ-like_N"/>
</dbReference>
<dbReference type="InterPro" id="IPR053931">
    <property type="entry name" value="RapZ_C"/>
</dbReference>
<dbReference type="NCBIfam" id="NF003828">
    <property type="entry name" value="PRK05416.1"/>
    <property type="match status" value="1"/>
</dbReference>
<dbReference type="PANTHER" id="PTHR30448">
    <property type="entry name" value="RNASE ADAPTER PROTEIN RAPZ"/>
    <property type="match status" value="1"/>
</dbReference>
<dbReference type="PANTHER" id="PTHR30448:SF0">
    <property type="entry name" value="RNASE ADAPTER PROTEIN RAPZ"/>
    <property type="match status" value="1"/>
</dbReference>
<dbReference type="Pfam" id="PF22740">
    <property type="entry name" value="PapZ_C"/>
    <property type="match status" value="1"/>
</dbReference>
<dbReference type="Pfam" id="PF03668">
    <property type="entry name" value="RapZ-like_N"/>
    <property type="match status" value="1"/>
</dbReference>
<dbReference type="PIRSF" id="PIRSF005052">
    <property type="entry name" value="P-loopkin"/>
    <property type="match status" value="1"/>
</dbReference>
<dbReference type="SUPFAM" id="SSF52540">
    <property type="entry name" value="P-loop containing nucleoside triphosphate hydrolases"/>
    <property type="match status" value="1"/>
</dbReference>
<proteinExistence type="inferred from homology"/>
<gene>
    <name type="ordered locus">ML0563</name>
</gene>
<feature type="chain" id="PRO_0000107730" description="Nucleotide-binding protein ML0563">
    <location>
        <begin position="1"/>
        <end position="298"/>
    </location>
</feature>
<feature type="binding site" evidence="1">
    <location>
        <begin position="21"/>
        <end position="28"/>
    </location>
    <ligand>
        <name>ATP</name>
        <dbReference type="ChEBI" id="CHEBI:30616"/>
    </ligand>
</feature>
<feature type="binding site" evidence="1">
    <location>
        <begin position="72"/>
        <end position="75"/>
    </location>
    <ligand>
        <name>GTP</name>
        <dbReference type="ChEBI" id="CHEBI:37565"/>
    </ligand>
</feature>
<organism>
    <name type="scientific">Mycobacterium leprae (strain TN)</name>
    <dbReference type="NCBI Taxonomy" id="272631"/>
    <lineage>
        <taxon>Bacteria</taxon>
        <taxon>Bacillati</taxon>
        <taxon>Actinomycetota</taxon>
        <taxon>Actinomycetes</taxon>
        <taxon>Mycobacteriales</taxon>
        <taxon>Mycobacteriaceae</taxon>
        <taxon>Mycobacterium</taxon>
    </lineage>
</organism>
<comment type="function">
    <text evidence="1">Displays ATPase and GTPase activities.</text>
</comment>
<comment type="similarity">
    <text evidence="1">Belongs to the RapZ-like family.</text>
</comment>
<accession>Q9CCP0</accession>
<sequence>MSGNNHPGDASAEIDVVLVTGLSGAGRGTAAKVLEDLGWYVADNLPPQLITWMVDFGLAAGSRITQLAVVMDVRSRGFTGDLDSVRRELATRNIIPRVVFMEASDDMLVRRYEQNRRSHPLQGEQTLAEGIAAERRMLAPVRATADLIIDTSALSVPGLRESIERAFGGDASATTSVTVESFGFKYGLPMDADIVMDVRFLPNPHWVDELRSLTGQHSAVRDYVLGQPGAAEFLRTYRRLLSLVVDGYRREGKRYMTVAIGCTGGKHRSVAIAEALMGLLQSDLQLSVRVLHRDLGRE</sequence>